<sequence length="41" mass="4833">MKVVSSLKSLKKRDKDCQIVKRRGKIFVINKKNKRFKAKQG</sequence>
<accession>Q1RJ14</accession>
<protein>
    <recommendedName>
        <fullName evidence="1">Large ribosomal subunit protein bL36</fullName>
    </recommendedName>
    <alternativeName>
        <fullName evidence="2">50S ribosomal protein L36</fullName>
    </alternativeName>
</protein>
<name>RL36_RICBR</name>
<reference key="1">
    <citation type="journal article" date="2006" name="PLoS Genet.">
        <title>Genome sequence of Rickettsia bellii illuminates the role of amoebae in gene exchanges between intracellular pathogens.</title>
        <authorList>
            <person name="Ogata H."/>
            <person name="La Scola B."/>
            <person name="Audic S."/>
            <person name="Renesto P."/>
            <person name="Blanc G."/>
            <person name="Robert C."/>
            <person name="Fournier P.-E."/>
            <person name="Claverie J.-M."/>
            <person name="Raoult D."/>
        </authorList>
    </citation>
    <scope>NUCLEOTIDE SEQUENCE [LARGE SCALE GENOMIC DNA]</scope>
    <source>
        <strain>RML369-C</strain>
    </source>
</reference>
<gene>
    <name evidence="1" type="primary">rpmJ</name>
    <name type="ordered locus">RBE_0569</name>
</gene>
<proteinExistence type="inferred from homology"/>
<dbReference type="EMBL" id="CP000087">
    <property type="protein sequence ID" value="ABE04650.1"/>
    <property type="molecule type" value="Genomic_DNA"/>
</dbReference>
<dbReference type="SMR" id="Q1RJ14"/>
<dbReference type="KEGG" id="rbe:RBE_0569"/>
<dbReference type="eggNOG" id="COG0257">
    <property type="taxonomic scope" value="Bacteria"/>
</dbReference>
<dbReference type="HOGENOM" id="CLU_135723_3_2_5"/>
<dbReference type="Proteomes" id="UP000001951">
    <property type="component" value="Chromosome"/>
</dbReference>
<dbReference type="GO" id="GO:1990904">
    <property type="term" value="C:ribonucleoprotein complex"/>
    <property type="evidence" value="ECO:0007669"/>
    <property type="project" value="UniProtKB-KW"/>
</dbReference>
<dbReference type="GO" id="GO:0005840">
    <property type="term" value="C:ribosome"/>
    <property type="evidence" value="ECO:0007669"/>
    <property type="project" value="UniProtKB-KW"/>
</dbReference>
<dbReference type="GO" id="GO:0003735">
    <property type="term" value="F:structural constituent of ribosome"/>
    <property type="evidence" value="ECO:0007669"/>
    <property type="project" value="InterPro"/>
</dbReference>
<dbReference type="GO" id="GO:0006412">
    <property type="term" value="P:translation"/>
    <property type="evidence" value="ECO:0007669"/>
    <property type="project" value="UniProtKB-UniRule"/>
</dbReference>
<dbReference type="HAMAP" id="MF_00251">
    <property type="entry name" value="Ribosomal_bL36"/>
    <property type="match status" value="1"/>
</dbReference>
<dbReference type="InterPro" id="IPR000473">
    <property type="entry name" value="Ribosomal_bL36"/>
</dbReference>
<dbReference type="InterPro" id="IPR035977">
    <property type="entry name" value="Ribosomal_bL36_sp"/>
</dbReference>
<dbReference type="InterPro" id="IPR047621">
    <property type="entry name" value="Ribosomal_L36_bact"/>
</dbReference>
<dbReference type="NCBIfam" id="NF002021">
    <property type="entry name" value="PRK00831.1"/>
    <property type="match status" value="1"/>
</dbReference>
<dbReference type="PANTHER" id="PTHR47781">
    <property type="entry name" value="50S RIBOSOMAL PROTEIN L36 2"/>
    <property type="match status" value="1"/>
</dbReference>
<dbReference type="PANTHER" id="PTHR47781:SF1">
    <property type="entry name" value="LARGE RIBOSOMAL SUBUNIT PROTEIN BL36B"/>
    <property type="match status" value="1"/>
</dbReference>
<dbReference type="Pfam" id="PF00444">
    <property type="entry name" value="Ribosomal_L36"/>
    <property type="match status" value="1"/>
</dbReference>
<dbReference type="SUPFAM" id="SSF57840">
    <property type="entry name" value="Ribosomal protein L36"/>
    <property type="match status" value="1"/>
</dbReference>
<dbReference type="PROSITE" id="PS00828">
    <property type="entry name" value="RIBOSOMAL_L36"/>
    <property type="match status" value="1"/>
</dbReference>
<comment type="similarity">
    <text evidence="1">Belongs to the bacterial ribosomal protein bL36 family.</text>
</comment>
<organism>
    <name type="scientific">Rickettsia bellii (strain RML369-C)</name>
    <dbReference type="NCBI Taxonomy" id="336407"/>
    <lineage>
        <taxon>Bacteria</taxon>
        <taxon>Pseudomonadati</taxon>
        <taxon>Pseudomonadota</taxon>
        <taxon>Alphaproteobacteria</taxon>
        <taxon>Rickettsiales</taxon>
        <taxon>Rickettsiaceae</taxon>
        <taxon>Rickettsieae</taxon>
        <taxon>Rickettsia</taxon>
        <taxon>belli group</taxon>
    </lineage>
</organism>
<evidence type="ECO:0000255" key="1">
    <source>
        <dbReference type="HAMAP-Rule" id="MF_00251"/>
    </source>
</evidence>
<evidence type="ECO:0000305" key="2"/>
<keyword id="KW-0687">Ribonucleoprotein</keyword>
<keyword id="KW-0689">Ribosomal protein</keyword>
<feature type="chain" id="PRO_0000278025" description="Large ribosomal subunit protein bL36">
    <location>
        <begin position="1"/>
        <end position="41"/>
    </location>
</feature>